<gene>
    <name type="ordered locus">PM0674</name>
</gene>
<reference key="1">
    <citation type="journal article" date="2001" name="Proc. Natl. Acad. Sci. U.S.A.">
        <title>Complete genomic sequence of Pasteurella multocida Pm70.</title>
        <authorList>
            <person name="May B.J."/>
            <person name="Zhang Q."/>
            <person name="Li L.L."/>
            <person name="Paustian M.L."/>
            <person name="Whittam T.S."/>
            <person name="Kapur V."/>
        </authorList>
    </citation>
    <scope>NUCLEOTIDE SEQUENCE [LARGE SCALE GENOMIC DNA]</scope>
    <source>
        <strain>Pm70</strain>
    </source>
</reference>
<protein>
    <recommendedName>
        <fullName>Uncharacterized protein PM0674</fullName>
    </recommendedName>
</protein>
<feature type="signal peptide" evidence="1">
    <location>
        <begin position="1"/>
        <end position="18"/>
    </location>
</feature>
<feature type="chain" id="PRO_0000014178" description="Uncharacterized protein PM0674">
    <location>
        <begin position="19"/>
        <end position="230"/>
    </location>
</feature>
<dbReference type="EMBL" id="AE004439">
    <property type="protein sequence ID" value="AAK02758.1"/>
    <property type="molecule type" value="Genomic_DNA"/>
</dbReference>
<dbReference type="RefSeq" id="WP_005726559.1">
    <property type="nucleotide sequence ID" value="NC_002663.1"/>
</dbReference>
<dbReference type="STRING" id="272843.PM0674"/>
<dbReference type="EnsemblBacteria" id="AAK02758">
    <property type="protein sequence ID" value="AAK02758"/>
    <property type="gene ID" value="PM0674"/>
</dbReference>
<dbReference type="KEGG" id="pmu:PM0674"/>
<dbReference type="HOGENOM" id="CLU_1318668_0_0_6"/>
<dbReference type="OrthoDB" id="5674571at2"/>
<dbReference type="Proteomes" id="UP000000809">
    <property type="component" value="Chromosome"/>
</dbReference>
<dbReference type="PROSITE" id="PS51257">
    <property type="entry name" value="PROKAR_LIPOPROTEIN"/>
    <property type="match status" value="1"/>
</dbReference>
<evidence type="ECO:0000255" key="1">
    <source>
        <dbReference type="PROSITE-ProRule" id="PRU00303"/>
    </source>
</evidence>
<sequence length="230" mass="25287">MRQYTSKSILFMTAIALSACSHLPQTTSQGATVVSAQTVTQALGVDLASLEQKATALKPFEYIHNQDHYIAYLSTQPELIKVQKNGQLAKFFYQAGKVSFVQDKTGVYQFNQSGDVIAAIDANGKKQHANPADSKALWHKASQLQKLFGYNKADASAGRVKTGSDAKVNYLCIAKIQQVAQTNRVFRSPENAVVTENQIKATVRLNGNQYYNMDCQLSGDKVSKLSLMKK</sequence>
<accession>Q9CMX6</accession>
<proteinExistence type="inferred from homology"/>
<organism>
    <name type="scientific">Pasteurella multocida (strain Pm70)</name>
    <dbReference type="NCBI Taxonomy" id="272843"/>
    <lineage>
        <taxon>Bacteria</taxon>
        <taxon>Pseudomonadati</taxon>
        <taxon>Pseudomonadota</taxon>
        <taxon>Gammaproteobacteria</taxon>
        <taxon>Pasteurellales</taxon>
        <taxon>Pasteurellaceae</taxon>
        <taxon>Pasteurella</taxon>
    </lineage>
</organism>
<name>Y674_PASMU</name>
<keyword id="KW-1185">Reference proteome</keyword>
<keyword id="KW-0732">Signal</keyword>